<comment type="function">
    <text evidence="1">Required for anaerobic carnitine reduction. May bring reductant to CaiA.</text>
</comment>
<comment type="pathway">
    <text evidence="1">Amine and polyamine metabolism; carnitine metabolism.</text>
</comment>
<comment type="subunit">
    <text evidence="1">Heterodimer of FixA and FixB.</text>
</comment>
<comment type="similarity">
    <text evidence="1">Belongs to the ETF beta-subunit/FixA family.</text>
</comment>
<accession>B5FHH0</accession>
<proteinExistence type="inferred from homology"/>
<feature type="chain" id="PRO_1000136323" description="Protein FixA">
    <location>
        <begin position="1"/>
        <end position="256"/>
    </location>
</feature>
<protein>
    <recommendedName>
        <fullName evidence="1">Protein FixA</fullName>
    </recommendedName>
</protein>
<name>FIXA_SALDC</name>
<keyword id="KW-0249">Electron transport</keyword>
<keyword id="KW-0813">Transport</keyword>
<reference key="1">
    <citation type="journal article" date="2011" name="J. Bacteriol.">
        <title>Comparative genomics of 28 Salmonella enterica isolates: evidence for CRISPR-mediated adaptive sublineage evolution.</title>
        <authorList>
            <person name="Fricke W.F."/>
            <person name="Mammel M.K."/>
            <person name="McDermott P.F."/>
            <person name="Tartera C."/>
            <person name="White D.G."/>
            <person name="Leclerc J.E."/>
            <person name="Ravel J."/>
            <person name="Cebula T.A."/>
        </authorList>
    </citation>
    <scope>NUCLEOTIDE SEQUENCE [LARGE SCALE GENOMIC DNA]</scope>
    <source>
        <strain>CT_02021853</strain>
    </source>
</reference>
<organism>
    <name type="scientific">Salmonella dublin (strain CT_02021853)</name>
    <dbReference type="NCBI Taxonomy" id="439851"/>
    <lineage>
        <taxon>Bacteria</taxon>
        <taxon>Pseudomonadati</taxon>
        <taxon>Pseudomonadota</taxon>
        <taxon>Gammaproteobacteria</taxon>
        <taxon>Enterobacterales</taxon>
        <taxon>Enterobacteriaceae</taxon>
        <taxon>Salmonella</taxon>
    </lineage>
</organism>
<sequence>MKIITCYKCVPDEQDIAINNADGTLDFSKADSKISQYDLNAIEAACQLKQQLGDAQVVAMSVGGKALTNAKGRKDVLSRGPDELIVVIDDQFEQALPQHTATALAAAAQKSGFDLLICGDGSSDLYAQQVGLLVGEALNIPAINGVSKILSLTDSTLTVERELEDEVETLSIPLPAVIAVSTDINTPQIPSMKAILGAAKKPVQVWSPADIGLNSVSAYSTQQVAAPKQRERQRVVIEGDGEEQIAAFVENLRKII</sequence>
<dbReference type="EMBL" id="CP001144">
    <property type="protein sequence ID" value="ACH74813.1"/>
    <property type="molecule type" value="Genomic_DNA"/>
</dbReference>
<dbReference type="RefSeq" id="WP_000692191.1">
    <property type="nucleotide sequence ID" value="NC_011205.1"/>
</dbReference>
<dbReference type="SMR" id="B5FHH0"/>
<dbReference type="KEGG" id="sed:SeD_A0082"/>
<dbReference type="HOGENOM" id="CLU_060196_2_2_6"/>
<dbReference type="UniPathway" id="UPA00117"/>
<dbReference type="Proteomes" id="UP000008322">
    <property type="component" value="Chromosome"/>
</dbReference>
<dbReference type="GO" id="GO:0009055">
    <property type="term" value="F:electron transfer activity"/>
    <property type="evidence" value="ECO:0007669"/>
    <property type="project" value="InterPro"/>
</dbReference>
<dbReference type="GO" id="GO:0009437">
    <property type="term" value="P:carnitine metabolic process"/>
    <property type="evidence" value="ECO:0007669"/>
    <property type="project" value="UniProtKB-UniRule"/>
</dbReference>
<dbReference type="CDD" id="cd01714">
    <property type="entry name" value="ETF_beta"/>
    <property type="match status" value="1"/>
</dbReference>
<dbReference type="FunFam" id="3.40.50.620:FF:000072">
    <property type="entry name" value="Protein FixA homolog"/>
    <property type="match status" value="1"/>
</dbReference>
<dbReference type="Gene3D" id="3.40.50.620">
    <property type="entry name" value="HUPs"/>
    <property type="match status" value="1"/>
</dbReference>
<dbReference type="HAMAP" id="MF_01055">
    <property type="entry name" value="FixA"/>
    <property type="match status" value="1"/>
</dbReference>
<dbReference type="InterPro" id="IPR000049">
    <property type="entry name" value="ET-Flavoprotein_bsu_CS"/>
</dbReference>
<dbReference type="InterPro" id="IPR014730">
    <property type="entry name" value="ETF_a/b_N"/>
</dbReference>
<dbReference type="InterPro" id="IPR012255">
    <property type="entry name" value="ETF_b"/>
</dbReference>
<dbReference type="InterPro" id="IPR033948">
    <property type="entry name" value="ETF_beta_N"/>
</dbReference>
<dbReference type="InterPro" id="IPR023463">
    <property type="entry name" value="FixA"/>
</dbReference>
<dbReference type="InterPro" id="IPR014729">
    <property type="entry name" value="Rossmann-like_a/b/a_fold"/>
</dbReference>
<dbReference type="NCBIfam" id="NF002888">
    <property type="entry name" value="PRK03359.1"/>
    <property type="match status" value="1"/>
</dbReference>
<dbReference type="PANTHER" id="PTHR21294">
    <property type="entry name" value="ELECTRON TRANSFER FLAVOPROTEIN BETA-SUBUNIT"/>
    <property type="match status" value="1"/>
</dbReference>
<dbReference type="PANTHER" id="PTHR21294:SF17">
    <property type="entry name" value="PROTEIN FIXA"/>
    <property type="match status" value="1"/>
</dbReference>
<dbReference type="Pfam" id="PF01012">
    <property type="entry name" value="ETF"/>
    <property type="match status" value="1"/>
</dbReference>
<dbReference type="PIRSF" id="PIRSF000090">
    <property type="entry name" value="Beta-ETF"/>
    <property type="match status" value="1"/>
</dbReference>
<dbReference type="SMART" id="SM00893">
    <property type="entry name" value="ETF"/>
    <property type="match status" value="1"/>
</dbReference>
<dbReference type="SUPFAM" id="SSF52402">
    <property type="entry name" value="Adenine nucleotide alpha hydrolases-like"/>
    <property type="match status" value="1"/>
</dbReference>
<dbReference type="PROSITE" id="PS01065">
    <property type="entry name" value="ETF_BETA"/>
    <property type="match status" value="1"/>
</dbReference>
<gene>
    <name evidence="1" type="primary">fixA</name>
    <name type="ordered locus">SeD_A0082</name>
</gene>
<evidence type="ECO:0000255" key="1">
    <source>
        <dbReference type="HAMAP-Rule" id="MF_01055"/>
    </source>
</evidence>